<feature type="chain" id="PRO_0000127258" description="Transcription factor 4">
    <location>
        <begin position="1"/>
        <end position="589"/>
    </location>
</feature>
<feature type="domain" description="bHLH" evidence="3">
    <location>
        <begin position="486"/>
        <end position="539"/>
    </location>
</feature>
<feature type="region of interest" description="Disordered" evidence="4">
    <location>
        <begin position="1"/>
        <end position="124"/>
    </location>
</feature>
<feature type="region of interest" description="Leucine-zipper">
    <location>
        <begin position="136"/>
        <end position="157"/>
    </location>
</feature>
<feature type="region of interest" description="Disordered" evidence="4">
    <location>
        <begin position="138"/>
        <end position="163"/>
    </location>
</feature>
<feature type="region of interest" description="Disordered" evidence="4">
    <location>
        <begin position="184"/>
        <end position="239"/>
    </location>
</feature>
<feature type="region of interest" description="Disordered" evidence="4">
    <location>
        <begin position="254"/>
        <end position="297"/>
    </location>
</feature>
<feature type="region of interest" description="Class A specific domain">
    <location>
        <begin position="380"/>
        <end position="403"/>
    </location>
</feature>
<feature type="region of interest" description="Disordered" evidence="4">
    <location>
        <begin position="384"/>
        <end position="492"/>
    </location>
</feature>
<feature type="region of interest" description="Disordered" evidence="4">
    <location>
        <begin position="556"/>
        <end position="589"/>
    </location>
</feature>
<feature type="compositionally biased region" description="Polar residues" evidence="4">
    <location>
        <begin position="56"/>
        <end position="74"/>
    </location>
</feature>
<feature type="compositionally biased region" description="Polar residues" evidence="4">
    <location>
        <begin position="184"/>
        <end position="224"/>
    </location>
</feature>
<feature type="compositionally biased region" description="Low complexity" evidence="4">
    <location>
        <begin position="255"/>
        <end position="266"/>
    </location>
</feature>
<feature type="compositionally biased region" description="Polar residues" evidence="4">
    <location>
        <begin position="283"/>
        <end position="292"/>
    </location>
</feature>
<feature type="compositionally biased region" description="Low complexity" evidence="4">
    <location>
        <begin position="385"/>
        <end position="398"/>
    </location>
</feature>
<feature type="compositionally biased region" description="Low complexity" evidence="4">
    <location>
        <begin position="421"/>
        <end position="430"/>
    </location>
</feature>
<feature type="compositionally biased region" description="Basic and acidic residues" evidence="4">
    <location>
        <begin position="445"/>
        <end position="461"/>
    </location>
</feature>
<feature type="compositionally biased region" description="Basic and acidic residues" evidence="4">
    <location>
        <begin position="477"/>
        <end position="492"/>
    </location>
</feature>
<feature type="modified residue" description="Phosphoserine" evidence="2">
    <location>
        <position position="8"/>
    </location>
</feature>
<feature type="modified residue" description="Phosphoserine" evidence="2">
    <location>
        <position position="13"/>
    </location>
</feature>
<feature type="modified residue" description="Phosphoserine" evidence="8">
    <location>
        <position position="290"/>
    </location>
</feature>
<feature type="modified residue" description="Phosphoserine" evidence="2">
    <location>
        <position position="433"/>
    </location>
</feature>
<feature type="splice variant" id="VSP_002116" description="In isoform 2." evidence="5 6">
    <location>
        <begin position="464"/>
        <end position="467"/>
    </location>
</feature>
<feature type="sequence conflict" description="In Ref. 2; AAA21122." evidence="7" ref="2">
    <original>T</original>
    <variation>A</variation>
    <location>
        <position position="582"/>
    </location>
</feature>
<dbReference type="EMBL" id="AF149284">
    <property type="protein sequence ID" value="AAK26670.1"/>
    <property type="molecule type" value="mRNA"/>
</dbReference>
<dbReference type="EMBL" id="U09228">
    <property type="protein sequence ID" value="AAA21122.1"/>
    <property type="molecule type" value="mRNA"/>
</dbReference>
<dbReference type="PIR" id="A53689">
    <property type="entry name" value="A53689"/>
</dbReference>
<dbReference type="RefSeq" id="NP_445821.1">
    <property type="nucleotide sequence ID" value="NM_053369.1"/>
</dbReference>
<dbReference type="CORUM" id="Q62655"/>
<dbReference type="FunCoup" id="Q62655">
    <property type="interactions" value="2798"/>
</dbReference>
<dbReference type="STRING" id="10116.ENSRNOP00000070021"/>
<dbReference type="iPTMnet" id="Q62655"/>
<dbReference type="PhosphoSitePlus" id="Q62655"/>
<dbReference type="jPOST" id="Q62655"/>
<dbReference type="PaxDb" id="10116-ENSRNOP00000020431"/>
<dbReference type="GeneID" id="84382"/>
<dbReference type="KEGG" id="rno:84382"/>
<dbReference type="AGR" id="RGD:69271"/>
<dbReference type="CTD" id="6925"/>
<dbReference type="RGD" id="69271">
    <property type="gene designation" value="Tcf4"/>
</dbReference>
<dbReference type="eggNOG" id="KOG3910">
    <property type="taxonomic scope" value="Eukaryota"/>
</dbReference>
<dbReference type="InParanoid" id="Q62655"/>
<dbReference type="PhylomeDB" id="Q62655"/>
<dbReference type="Reactome" id="R-RNO-525793">
    <property type="pathway name" value="Myogenesis"/>
</dbReference>
<dbReference type="PRO" id="PR:Q62655"/>
<dbReference type="Proteomes" id="UP000002494">
    <property type="component" value="Unplaced"/>
</dbReference>
<dbReference type="GO" id="GO:1990907">
    <property type="term" value="C:beta-catenin-TCF complex"/>
    <property type="evidence" value="ECO:0000266"/>
    <property type="project" value="RGD"/>
</dbReference>
<dbReference type="GO" id="GO:0070369">
    <property type="term" value="C:beta-catenin-TCF7L2 complex"/>
    <property type="evidence" value="ECO:0000266"/>
    <property type="project" value="RGD"/>
</dbReference>
<dbReference type="GO" id="GO:0000785">
    <property type="term" value="C:chromatin"/>
    <property type="evidence" value="ECO:0000266"/>
    <property type="project" value="RGD"/>
</dbReference>
<dbReference type="GO" id="GO:0005634">
    <property type="term" value="C:nucleus"/>
    <property type="evidence" value="ECO:0000266"/>
    <property type="project" value="RGD"/>
</dbReference>
<dbReference type="GO" id="GO:0005667">
    <property type="term" value="C:transcription regulator complex"/>
    <property type="evidence" value="ECO:0000266"/>
    <property type="project" value="RGD"/>
</dbReference>
<dbReference type="GO" id="GO:0008013">
    <property type="term" value="F:beta-catenin binding"/>
    <property type="evidence" value="ECO:0000266"/>
    <property type="project" value="RGD"/>
</dbReference>
<dbReference type="GO" id="GO:0043425">
    <property type="term" value="F:bHLH transcription factor binding"/>
    <property type="evidence" value="ECO:0000353"/>
    <property type="project" value="UniProtKB"/>
</dbReference>
<dbReference type="GO" id="GO:0003682">
    <property type="term" value="F:chromatin binding"/>
    <property type="evidence" value="ECO:0000266"/>
    <property type="project" value="RGD"/>
</dbReference>
<dbReference type="GO" id="GO:0003677">
    <property type="term" value="F:DNA binding"/>
    <property type="evidence" value="ECO:0000266"/>
    <property type="project" value="RGD"/>
</dbReference>
<dbReference type="GO" id="GO:0001228">
    <property type="term" value="F:DNA-binding transcription activator activity, RNA polymerase II-specific"/>
    <property type="evidence" value="ECO:0000266"/>
    <property type="project" value="RGD"/>
</dbReference>
<dbReference type="GO" id="GO:0003700">
    <property type="term" value="F:DNA-binding transcription factor activity"/>
    <property type="evidence" value="ECO:0000266"/>
    <property type="project" value="RGD"/>
</dbReference>
<dbReference type="GO" id="GO:0000981">
    <property type="term" value="F:DNA-binding transcription factor activity, RNA polymerase II-specific"/>
    <property type="evidence" value="ECO:0000266"/>
    <property type="project" value="RGD"/>
</dbReference>
<dbReference type="GO" id="GO:0003690">
    <property type="term" value="F:double-stranded DNA binding"/>
    <property type="evidence" value="ECO:0000314"/>
    <property type="project" value="RGD"/>
</dbReference>
<dbReference type="GO" id="GO:0070888">
    <property type="term" value="F:E-box binding"/>
    <property type="evidence" value="ECO:0000250"/>
    <property type="project" value="UniProtKB"/>
</dbReference>
<dbReference type="GO" id="GO:0042802">
    <property type="term" value="F:identical protein binding"/>
    <property type="evidence" value="ECO:0000266"/>
    <property type="project" value="RGD"/>
</dbReference>
<dbReference type="GO" id="GO:0046982">
    <property type="term" value="F:protein heterodimerization activity"/>
    <property type="evidence" value="ECO:0000250"/>
    <property type="project" value="UniProtKB"/>
</dbReference>
<dbReference type="GO" id="GO:0000978">
    <property type="term" value="F:RNA polymerase II cis-regulatory region sequence-specific DNA binding"/>
    <property type="evidence" value="ECO:0000266"/>
    <property type="project" value="RGD"/>
</dbReference>
<dbReference type="GO" id="GO:0000977">
    <property type="term" value="F:RNA polymerase II transcription regulatory region sequence-specific DNA binding"/>
    <property type="evidence" value="ECO:0000266"/>
    <property type="project" value="RGD"/>
</dbReference>
<dbReference type="GO" id="GO:1990837">
    <property type="term" value="F:sequence-specific double-stranded DNA binding"/>
    <property type="evidence" value="ECO:0000266"/>
    <property type="project" value="RGD"/>
</dbReference>
<dbReference type="GO" id="GO:0001093">
    <property type="term" value="F:TFIIB-class transcription factor binding"/>
    <property type="evidence" value="ECO:0000266"/>
    <property type="project" value="RGD"/>
</dbReference>
<dbReference type="GO" id="GO:0003714">
    <property type="term" value="F:transcription corepressor activity"/>
    <property type="evidence" value="ECO:0000266"/>
    <property type="project" value="RGD"/>
</dbReference>
<dbReference type="GO" id="GO:0042118">
    <property type="term" value="P:endothelial cell activation"/>
    <property type="evidence" value="ECO:0000266"/>
    <property type="project" value="RGD"/>
</dbReference>
<dbReference type="GO" id="GO:0016525">
    <property type="term" value="P:negative regulation of angiogenesis"/>
    <property type="evidence" value="ECO:0000266"/>
    <property type="project" value="RGD"/>
</dbReference>
<dbReference type="GO" id="GO:0010629">
    <property type="term" value="P:negative regulation of gene expression"/>
    <property type="evidence" value="ECO:0000266"/>
    <property type="project" value="RGD"/>
</dbReference>
<dbReference type="GO" id="GO:0000122">
    <property type="term" value="P:negative regulation of transcription by RNA polymerase II"/>
    <property type="evidence" value="ECO:0000266"/>
    <property type="project" value="RGD"/>
</dbReference>
<dbReference type="GO" id="GO:0045893">
    <property type="term" value="P:positive regulation of DNA-templated transcription"/>
    <property type="evidence" value="ECO:0000266"/>
    <property type="project" value="RGD"/>
</dbReference>
<dbReference type="GO" id="GO:0045666">
    <property type="term" value="P:positive regulation of neuron differentiation"/>
    <property type="evidence" value="ECO:0000250"/>
    <property type="project" value="UniProtKB"/>
</dbReference>
<dbReference type="GO" id="GO:0045944">
    <property type="term" value="P:positive regulation of transcription by RNA polymerase II"/>
    <property type="evidence" value="ECO:0000314"/>
    <property type="project" value="RGD"/>
</dbReference>
<dbReference type="GO" id="GO:0065004">
    <property type="term" value="P:protein-DNA complex assembly"/>
    <property type="evidence" value="ECO:0000266"/>
    <property type="project" value="RGD"/>
</dbReference>
<dbReference type="GO" id="GO:0006355">
    <property type="term" value="P:regulation of DNA-templated transcription"/>
    <property type="evidence" value="ECO:0000266"/>
    <property type="project" value="RGD"/>
</dbReference>
<dbReference type="GO" id="GO:0006357">
    <property type="term" value="P:regulation of transcription by RNA polymerase II"/>
    <property type="evidence" value="ECO:0000318"/>
    <property type="project" value="GO_Central"/>
</dbReference>
<dbReference type="GO" id="GO:1900746">
    <property type="term" value="P:regulation of vascular endothelial growth factor signaling pathway"/>
    <property type="evidence" value="ECO:0000266"/>
    <property type="project" value="RGD"/>
</dbReference>
<dbReference type="CDD" id="cd18945">
    <property type="entry name" value="bHLH_E-protein_TCF4_E2-2"/>
    <property type="match status" value="1"/>
</dbReference>
<dbReference type="FunFam" id="4.10.280.10:FF:000001">
    <property type="entry name" value="Putative transcription factor 12"/>
    <property type="match status" value="1"/>
</dbReference>
<dbReference type="Gene3D" id="4.10.280.10">
    <property type="entry name" value="Helix-loop-helix DNA-binding domain"/>
    <property type="match status" value="1"/>
</dbReference>
<dbReference type="InterPro" id="IPR011598">
    <property type="entry name" value="bHLH_dom"/>
</dbReference>
<dbReference type="InterPro" id="IPR036638">
    <property type="entry name" value="HLH_DNA-bd_sf"/>
</dbReference>
<dbReference type="InterPro" id="IPR051098">
    <property type="entry name" value="NeuroDiff_E-box_TFs"/>
</dbReference>
<dbReference type="PANTHER" id="PTHR11793">
    <property type="entry name" value="BASIC HELIX-LOOP-HELIX TRANSCRIPTION FACTOR"/>
    <property type="match status" value="1"/>
</dbReference>
<dbReference type="PANTHER" id="PTHR11793:SF10">
    <property type="entry name" value="TRANSCRIPTION FACTOR 4"/>
    <property type="match status" value="1"/>
</dbReference>
<dbReference type="Pfam" id="PF00010">
    <property type="entry name" value="HLH"/>
    <property type="match status" value="1"/>
</dbReference>
<dbReference type="SMART" id="SM00353">
    <property type="entry name" value="HLH"/>
    <property type="match status" value="1"/>
</dbReference>
<dbReference type="SUPFAM" id="SSF47459">
    <property type="entry name" value="HLH, helix-loop-helix DNA-binding domain"/>
    <property type="match status" value="1"/>
</dbReference>
<dbReference type="PROSITE" id="PS50888">
    <property type="entry name" value="BHLH"/>
    <property type="match status" value="1"/>
</dbReference>
<protein>
    <recommendedName>
        <fullName>Transcription factor 4</fullName>
        <shortName>TCF-4</shortName>
    </recommendedName>
    <alternativeName>
        <fullName>Immunoglobulin transcription factor 2</fullName>
        <shortName>ITF-2</shortName>
        <shortName>RITF-2</shortName>
    </alternativeName>
    <alternativeName>
        <fullName>R8f DNA-binding protein</fullName>
    </alternativeName>
    <alternativeName>
        <fullName>SL3-3 enhancer factor 2</fullName>
        <shortName>SEF-2</shortName>
    </alternativeName>
</protein>
<keyword id="KW-0010">Activator</keyword>
<keyword id="KW-0025">Alternative splicing</keyword>
<keyword id="KW-0238">DNA-binding</keyword>
<keyword id="KW-0539">Nucleus</keyword>
<keyword id="KW-0597">Phosphoprotein</keyword>
<keyword id="KW-1185">Reference proteome</keyword>
<keyword id="KW-0804">Transcription</keyword>
<keyword id="KW-0805">Transcription regulation</keyword>
<proteinExistence type="evidence at protein level"/>
<gene>
    <name type="primary">Tcf4</name>
    <name type="synonym">Itf2</name>
    <name type="synonym">Sef2</name>
</gene>
<accession>Q62655</accession>
<accession>Q99N33</accession>
<name>ITF2_RAT</name>
<organism>
    <name type="scientific">Rattus norvegicus</name>
    <name type="common">Rat</name>
    <dbReference type="NCBI Taxonomy" id="10116"/>
    <lineage>
        <taxon>Eukaryota</taxon>
        <taxon>Metazoa</taxon>
        <taxon>Chordata</taxon>
        <taxon>Craniata</taxon>
        <taxon>Vertebrata</taxon>
        <taxon>Euteleostomi</taxon>
        <taxon>Mammalia</taxon>
        <taxon>Eutheria</taxon>
        <taxon>Euarchontoglires</taxon>
        <taxon>Glires</taxon>
        <taxon>Rodentia</taxon>
        <taxon>Myomorpha</taxon>
        <taxon>Muroidea</taxon>
        <taxon>Muridae</taxon>
        <taxon>Murinae</taxon>
        <taxon>Rattus</taxon>
    </lineage>
</organism>
<reference key="1">
    <citation type="submission" date="1999-05" db="EMBL/GenBank/DDBJ databases">
        <title>Identification and analysis of a novel helix-loop-helix transcription factor-encoding gene from Rat forebrain.</title>
        <authorList>
            <person name="Diaz M.I."/>
            <person name="Lopez J."/>
            <person name="Padilla S."/>
            <person name="Madrazo J.A."/>
            <person name="Capo D."/>
            <person name="Cabrero N."/>
            <person name="Felix C."/>
            <person name="Ossorio J."/>
            <person name="Olmeda Y."/>
            <person name="Lugo D.I."/>
        </authorList>
    </citation>
    <scope>NUCLEOTIDE SEQUENCE [MRNA] (ISOFORM 2)</scope>
    <source>
        <tissue>Forebrain</tissue>
    </source>
</reference>
<reference key="2">
    <citation type="journal article" date="1994" name="J. Biol. Chem.">
        <title>Isolation of two E-box binding factors that interact with the rat tyrosine hydroxylase enhancer.</title>
        <authorList>
            <person name="Yoon S.O."/>
            <person name="Chikaraishi D.M."/>
        </authorList>
    </citation>
    <scope>NUCLEOTIDE SEQUENCE [MRNA] OF 162-589 (ISOFORMS 1 AND 2)</scope>
    <source>
        <strain>New England Deaconess Hospital</strain>
        <tissue>Adrenal medulla</tissue>
    </source>
</reference>
<reference key="3">
    <citation type="journal article" date="2012" name="Nat. Commun.">
        <title>Quantitative maps of protein phosphorylation sites across 14 different rat organs and tissues.</title>
        <authorList>
            <person name="Lundby A."/>
            <person name="Secher A."/>
            <person name="Lage K."/>
            <person name="Nordsborg N.B."/>
            <person name="Dmytriyev A."/>
            <person name="Lundby C."/>
            <person name="Olsen J.V."/>
        </authorList>
    </citation>
    <scope>PHOSPHORYLATION [LARGE SCALE ANALYSIS] AT SER-290</scope>
    <scope>IDENTIFICATION BY MASS SPECTROMETRY [LARGE SCALE ANALYSIS]</scope>
</reference>
<comment type="function">
    <text evidence="1">Transcription factor that binds to the immunoglobulin enhancer Mu-E5/KE5-motif. Involved in the initiation of neuronal differentiation. Activates transcription by binding to the E box (5'-CANNTG-3'). Binds to the E-box present in the somatostatin receptor 2 initiator element (SSTR2-INR) to activate transcription (By similarity). Interacts with the CCAAT displacement protein (CDP2) to bind the tyrosine hydroxylase enhancer.</text>
</comment>
<comment type="subunit">
    <text evidence="1">Efficient DNA binding requires dimerization with another bHLH protein. Forms homo- or heterooligomers with myogenin. Interacts with HIVEP2. Interacts with NEUROD2 (By similarity). Interacts with AGBL1 (By similarity).</text>
</comment>
<comment type="subcellular location">
    <subcellularLocation>
        <location evidence="7">Nucleus</location>
    </subcellularLocation>
</comment>
<comment type="alternative products">
    <event type="alternative splicing"/>
    <isoform>
        <id>Q62655-1</id>
        <name>1</name>
        <sequence type="displayed"/>
    </isoform>
    <isoform>
        <id>Q62655-2</id>
        <name>2</name>
        <sequence type="described" ref="VSP_002116"/>
    </isoform>
</comment>
<evidence type="ECO:0000250" key="1"/>
<evidence type="ECO:0000250" key="2">
    <source>
        <dbReference type="UniProtKB" id="P15884"/>
    </source>
</evidence>
<evidence type="ECO:0000255" key="3">
    <source>
        <dbReference type="PROSITE-ProRule" id="PRU00981"/>
    </source>
</evidence>
<evidence type="ECO:0000256" key="4">
    <source>
        <dbReference type="SAM" id="MobiDB-lite"/>
    </source>
</evidence>
<evidence type="ECO:0000303" key="5">
    <source>
    </source>
</evidence>
<evidence type="ECO:0000303" key="6">
    <source ref="1"/>
</evidence>
<evidence type="ECO:0000305" key="7"/>
<evidence type="ECO:0007744" key="8">
    <source>
    </source>
</evidence>
<sequence length="589" mass="63053">MTSRDLGSHDNLSPPFANSRIQSKTERGSYSSYGRENVQGCHQSLLGGDMDMGNPGTLSPTKPGSQYYPYSSNNARRRPLHSSTMEVQTKKVRKVPPGLPSSVYAPSASTADYNRDSPGYSSSKPAASTFSSSFFMQDGHHSSDPWSSSSGMNQPGYGGMLGNSHIPQSSSYCSLHPHERLSYPSHSSADINSSLPPMSTFHRSGTNHYSTSSCTPPANGTDSIMANRGTGAAGSSQTGDALGKALASIYSPDHTNNSFSSNPSTPVGSPPSLSAGTAVWSRNGGQASSSPNYEGPLHSLQSRIEDRLERLDDAIHVLRNHAVGPSTAVPGGHGDMHGIIGPSHNGAMGSLGSGYGTGLLSANRHSLMVGAHREDGVALRGSHSLLPNQVPVPQLPVQSATSPDLNPPQDPYRGMPPGLQGQSVSSGSSEIKSDDEGDENLQDTKSSEDKKLDDDKKDIKSITRSRSSNNDDEDLTPEQKAEREKERRMANNARERLRVRDINEAFKELGRMVQLHLKSDKPQTKLLILHQAVAVILSLEQQVRERNLNPKAACLKRREEEKVSSEPPPLSLAGPHPGMGDTANHMGQM</sequence>